<keyword id="KW-0106">Calcium</keyword>
<keyword id="KW-0119">Carbohydrate metabolism</keyword>
<keyword id="KW-1015">Disulfide bond</keyword>
<keyword id="KW-0325">Glycoprotein</keyword>
<keyword id="KW-0326">Glycosidase</keyword>
<keyword id="KW-0378">Hydrolase</keyword>
<keyword id="KW-0479">Metal-binding</keyword>
<keyword id="KW-0732">Signal</keyword>
<organism>
    <name type="scientific">Schwanniomyces occidentalis</name>
    <name type="common">Yeast</name>
    <name type="synonym">Debaryomyces occidentalis</name>
    <dbReference type="NCBI Taxonomy" id="27300"/>
    <lineage>
        <taxon>Eukaryota</taxon>
        <taxon>Fungi</taxon>
        <taxon>Dikarya</taxon>
        <taxon>Ascomycota</taxon>
        <taxon>Saccharomycotina</taxon>
        <taxon>Pichiomycetes</taxon>
        <taxon>Debaryomycetaceae</taxon>
        <taxon>Schwanniomyces</taxon>
    </lineage>
</organism>
<dbReference type="EC" id="3.2.1.1"/>
<dbReference type="EMBL" id="X73497">
    <property type="protein sequence ID" value="CAA51912.1"/>
    <property type="molecule type" value="Genomic_DNA"/>
</dbReference>
<dbReference type="PIR" id="S33921">
    <property type="entry name" value="S33921"/>
</dbReference>
<dbReference type="SMR" id="Q08806"/>
<dbReference type="CAZy" id="GH13">
    <property type="family name" value="Glycoside Hydrolase Family 13"/>
</dbReference>
<dbReference type="GlyCosmos" id="Q08806">
    <property type="glycosylation" value="1 site, No reported glycans"/>
</dbReference>
<dbReference type="GO" id="GO:0004556">
    <property type="term" value="F:alpha-amylase activity"/>
    <property type="evidence" value="ECO:0007669"/>
    <property type="project" value="UniProtKB-EC"/>
</dbReference>
<dbReference type="GO" id="GO:0005509">
    <property type="term" value="F:calcium ion binding"/>
    <property type="evidence" value="ECO:0007669"/>
    <property type="project" value="InterPro"/>
</dbReference>
<dbReference type="GO" id="GO:0016052">
    <property type="term" value="P:carbohydrate catabolic process"/>
    <property type="evidence" value="ECO:0007669"/>
    <property type="project" value="InterPro"/>
</dbReference>
<dbReference type="CDD" id="cd11319">
    <property type="entry name" value="AmyAc_euk_AmyA"/>
    <property type="match status" value="1"/>
</dbReference>
<dbReference type="FunFam" id="3.20.20.80:FF:000120">
    <property type="entry name" value="Alpha-amylase A"/>
    <property type="match status" value="1"/>
</dbReference>
<dbReference type="Gene3D" id="3.20.20.80">
    <property type="entry name" value="Glycosidases"/>
    <property type="match status" value="1"/>
</dbReference>
<dbReference type="Gene3D" id="2.60.40.1180">
    <property type="entry name" value="Golgi alpha-mannosidase II"/>
    <property type="match status" value="1"/>
</dbReference>
<dbReference type="InterPro" id="IPR013777">
    <property type="entry name" value="A-amylase-like"/>
</dbReference>
<dbReference type="InterPro" id="IPR015340">
    <property type="entry name" value="A_amylase_C_dom"/>
</dbReference>
<dbReference type="InterPro" id="IPR006047">
    <property type="entry name" value="Glyco_hydro_13_cat_dom"/>
</dbReference>
<dbReference type="InterPro" id="IPR013780">
    <property type="entry name" value="Glyco_hydro_b"/>
</dbReference>
<dbReference type="InterPro" id="IPR017853">
    <property type="entry name" value="Glycoside_hydrolase_SF"/>
</dbReference>
<dbReference type="PANTHER" id="PTHR10357:SF215">
    <property type="entry name" value="ALPHA-AMYLASE 1"/>
    <property type="match status" value="1"/>
</dbReference>
<dbReference type="PANTHER" id="PTHR10357">
    <property type="entry name" value="ALPHA-AMYLASE FAMILY MEMBER"/>
    <property type="match status" value="1"/>
</dbReference>
<dbReference type="Pfam" id="PF09260">
    <property type="entry name" value="A_amylase_dom_C"/>
    <property type="match status" value="1"/>
</dbReference>
<dbReference type="Pfam" id="PF00128">
    <property type="entry name" value="Alpha-amylase"/>
    <property type="match status" value="1"/>
</dbReference>
<dbReference type="PIRSF" id="PIRSF001024">
    <property type="entry name" value="Alph-amyl_fung"/>
    <property type="match status" value="1"/>
</dbReference>
<dbReference type="SMART" id="SM00642">
    <property type="entry name" value="Aamy"/>
    <property type="match status" value="1"/>
</dbReference>
<dbReference type="SUPFAM" id="SSF51445">
    <property type="entry name" value="(Trans)glycosidases"/>
    <property type="match status" value="1"/>
</dbReference>
<dbReference type="SUPFAM" id="SSF51011">
    <property type="entry name" value="Glycosyl hydrolase domain"/>
    <property type="match status" value="1"/>
</dbReference>
<comment type="catalytic activity">
    <reaction>
        <text>Endohydrolysis of (1-&gt;4)-alpha-D-glucosidic linkages in polysaccharides containing three or more (1-&gt;4)-alpha-linked D-glucose units.</text>
        <dbReference type="EC" id="3.2.1.1"/>
    </reaction>
</comment>
<comment type="cofactor">
    <cofactor evidence="1">
        <name>Ca(2+)</name>
        <dbReference type="ChEBI" id="CHEBI:29108"/>
    </cofactor>
    <text evidence="1">Binds 2 calcium ions per subunit. Calcium is inhibitory at high concentrations.</text>
</comment>
<comment type="similarity">
    <text evidence="4">Belongs to the glycosyl hydrolase 13 family.</text>
</comment>
<protein>
    <recommendedName>
        <fullName>Alpha-amylase 2</fullName>
        <ecNumber>3.2.1.1</ecNumber>
    </recommendedName>
    <alternativeName>
        <fullName>1,4-alpha-D-glucan glucanohydrolase 2</fullName>
    </alternativeName>
</protein>
<evidence type="ECO:0000250" key="1">
    <source>
        <dbReference type="UniProtKB" id="P0C1B3"/>
    </source>
</evidence>
<evidence type="ECO:0000250" key="2">
    <source>
        <dbReference type="UniProtKB" id="P56271"/>
    </source>
</evidence>
<evidence type="ECO:0000255" key="3"/>
<evidence type="ECO:0000305" key="4"/>
<accession>Q08806</accession>
<proteinExistence type="inferred from homology"/>
<feature type="signal peptide" evidence="3">
    <location>
        <begin position="1"/>
        <end position="20"/>
    </location>
</feature>
<feature type="chain" id="PRO_0000001353" description="Alpha-amylase 2">
    <location>
        <begin position="21"/>
        <end position="507"/>
    </location>
</feature>
<feature type="active site" description="Nucleophile" evidence="2">
    <location>
        <position position="238"/>
    </location>
</feature>
<feature type="active site" description="Proton donor" evidence="2">
    <location>
        <position position="262"/>
    </location>
</feature>
<feature type="binding site" evidence="1">
    <location>
        <position position="115"/>
    </location>
    <ligand>
        <name>substrate</name>
    </ligand>
</feature>
<feature type="binding site" evidence="1">
    <location>
        <position position="153"/>
    </location>
    <ligand>
        <name>Ca(2+)</name>
        <dbReference type="ChEBI" id="CHEBI:29108"/>
        <label>1</label>
    </ligand>
</feature>
<feature type="binding site" evidence="1">
    <location>
        <position position="154"/>
    </location>
    <ligand>
        <name>substrate</name>
    </ligand>
</feature>
<feature type="binding site" evidence="2">
    <location>
        <position position="194"/>
    </location>
    <ligand>
        <name>Ca(2+)</name>
        <dbReference type="ChEBI" id="CHEBI:29108"/>
        <label>1</label>
    </ligand>
</feature>
<feature type="binding site" evidence="2">
    <location>
        <position position="207"/>
    </location>
    <ligand>
        <name>Ca(2+)</name>
        <dbReference type="ChEBI" id="CHEBI:29108"/>
        <label>1</label>
    </ligand>
</feature>
<feature type="binding site" evidence="1">
    <location>
        <position position="236"/>
    </location>
    <ligand>
        <name>substrate</name>
    </ligand>
</feature>
<feature type="binding site" evidence="1">
    <location>
        <position position="238"/>
    </location>
    <ligand>
        <name>Ca(2+)</name>
        <dbReference type="ChEBI" id="CHEBI:29108"/>
        <label>2</label>
    </ligand>
</feature>
<feature type="binding site" evidence="1">
    <location>
        <begin position="241"/>
        <end position="242"/>
    </location>
    <ligand>
        <name>substrate</name>
    </ligand>
</feature>
<feature type="binding site" evidence="1">
    <location>
        <position position="242"/>
    </location>
    <ligand>
        <name>Ca(2+)</name>
        <dbReference type="ChEBI" id="CHEBI:29108"/>
        <label>1</label>
    </ligand>
</feature>
<feature type="binding site" evidence="1">
    <location>
        <position position="262"/>
    </location>
    <ligand>
        <name>Ca(2+)</name>
        <dbReference type="ChEBI" id="CHEBI:29108"/>
        <label>2</label>
    </ligand>
</feature>
<feature type="binding site" evidence="1">
    <location>
        <position position="266"/>
    </location>
    <ligand>
        <name>substrate</name>
    </ligand>
</feature>
<feature type="binding site" evidence="1">
    <location>
        <position position="329"/>
    </location>
    <ligand>
        <name>substrate</name>
    </ligand>
</feature>
<feature type="binding site" evidence="1">
    <location>
        <position position="376"/>
    </location>
    <ligand>
        <name>substrate</name>
    </ligand>
</feature>
<feature type="site" description="Transition state stabilizer" evidence="1">
    <location>
        <position position="329"/>
    </location>
</feature>
<feature type="glycosylation site" description="N-linked (GlcNAc...) asparagine" evidence="4">
    <location>
        <position position="229"/>
    </location>
</feature>
<feature type="disulfide bond" evidence="2">
    <location>
        <begin position="62"/>
        <end position="70"/>
    </location>
</feature>
<feature type="disulfide bond" evidence="2">
    <location>
        <begin position="182"/>
        <end position="196"/>
    </location>
</feature>
<feature type="disulfide bond" evidence="2">
    <location>
        <begin position="272"/>
        <end position="315"/>
    </location>
</feature>
<feature type="disulfide bond" evidence="2">
    <location>
        <begin position="470"/>
        <end position="505"/>
    </location>
</feature>
<name>AMY2_SCHOC</name>
<reference key="1">
    <citation type="journal article" date="1993" name="Curr. Genet.">
        <title>Molecular structure of the SWA2 gene encoding an AMY1-related alpha-amylase from Schwanniomyces occidentalis.</title>
        <authorList>
            <person name="Claros M.G."/>
            <person name="Abarca D."/>
            <person name="Fernandez-Lobato M."/>
            <person name="Jimenez A."/>
        </authorList>
    </citation>
    <scope>NUCLEOTIDE SEQUENCE [GENOMIC DNA]</scope>
    <source>
        <strain>ATCC 26077 / CBS 2863 / JCM 8124 / BCRC 20332 / NBRC 1840 / NRRL Y-2477</strain>
    </source>
</reference>
<sequence>MKFATILSTTALALSSLVASKPIFLSKRDAGSSAAAAWRSESIYQLVTDRFARTDGSTSATCNTGDRVYCGGTFQGIIDKLDYIQGMGFTAIWISPVVEQIPDDTGYGYAYHGYWMKDIYAINSNFGTADDLKNLSNELHKRNMKLMVDIVTNHYAWNGAGSSVAYSNYNPFNQQSYFHDYCLITNYDDQTNVEDCWEGDNTVSLPDLRTEDSDVSSIFNLWVAELVSNYSIDGLRIDSAKHVDESFYPSFQSAAGVYLLGEVYDGDPAYTCPYQNYMSGVTNYPLYYPMLRFFQGTSNSVDELNAMISSLESDCKDITLLGNFIENHDQPRLPSYTSDSALIKNAIAFNLMSDGIPIIYYGQEQGYSGSSDPNNREALWLSGYSTSNGYYKLISSVNQIRNQAIYKDSKYTTYWSDVLYASGHVIALQRGADDQRIVSVFNNLGSSGSQTVTFSTKYSGGEKVVDVLTCQTSYANSDSTLTVSISGGAPRIYAPASLIANSGICNF</sequence>
<gene>
    <name type="primary">SWA2</name>
</gene>